<reference key="1">
    <citation type="journal article" date="1997" name="Nature">
        <title>The nucleotide sequence of Saccharomyces cerevisiae chromosome IV.</title>
        <authorList>
            <person name="Jacq C."/>
            <person name="Alt-Moerbe J."/>
            <person name="Andre B."/>
            <person name="Arnold W."/>
            <person name="Bahr A."/>
            <person name="Ballesta J.P.G."/>
            <person name="Bargues M."/>
            <person name="Baron L."/>
            <person name="Becker A."/>
            <person name="Biteau N."/>
            <person name="Bloecker H."/>
            <person name="Blugeon C."/>
            <person name="Boskovic J."/>
            <person name="Brandt P."/>
            <person name="Brueckner M."/>
            <person name="Buitrago M.J."/>
            <person name="Coster F."/>
            <person name="Delaveau T."/>
            <person name="del Rey F."/>
            <person name="Dujon B."/>
            <person name="Eide L.G."/>
            <person name="Garcia-Cantalejo J.M."/>
            <person name="Goffeau A."/>
            <person name="Gomez-Peris A."/>
            <person name="Granotier C."/>
            <person name="Hanemann V."/>
            <person name="Hankeln T."/>
            <person name="Hoheisel J.D."/>
            <person name="Jaeger W."/>
            <person name="Jimenez A."/>
            <person name="Jonniaux J.-L."/>
            <person name="Kraemer C."/>
            <person name="Kuester H."/>
            <person name="Laamanen P."/>
            <person name="Legros Y."/>
            <person name="Louis E.J."/>
            <person name="Moeller-Rieker S."/>
            <person name="Monnet A."/>
            <person name="Moro M."/>
            <person name="Mueller-Auer S."/>
            <person name="Nussbaumer B."/>
            <person name="Paricio N."/>
            <person name="Paulin L."/>
            <person name="Perea J."/>
            <person name="Perez-Alonso M."/>
            <person name="Perez-Ortin J.E."/>
            <person name="Pohl T.M."/>
            <person name="Prydz H."/>
            <person name="Purnelle B."/>
            <person name="Rasmussen S.W."/>
            <person name="Remacha M.A."/>
            <person name="Revuelta J.L."/>
            <person name="Rieger M."/>
            <person name="Salom D."/>
            <person name="Saluz H.P."/>
            <person name="Saiz J.E."/>
            <person name="Saren A.-M."/>
            <person name="Schaefer M."/>
            <person name="Scharfe M."/>
            <person name="Schmidt E.R."/>
            <person name="Schneider C."/>
            <person name="Scholler P."/>
            <person name="Schwarz S."/>
            <person name="Soler-Mira A."/>
            <person name="Urrestarazu L.A."/>
            <person name="Verhasselt P."/>
            <person name="Vissers S."/>
            <person name="Voet M."/>
            <person name="Volckaert G."/>
            <person name="Wagner G."/>
            <person name="Wambutt R."/>
            <person name="Wedler E."/>
            <person name="Wedler H."/>
            <person name="Woelfl S."/>
            <person name="Harris D.E."/>
            <person name="Bowman S."/>
            <person name="Brown D."/>
            <person name="Churcher C.M."/>
            <person name="Connor R."/>
            <person name="Dedman K."/>
            <person name="Gentles S."/>
            <person name="Hamlin N."/>
            <person name="Hunt S."/>
            <person name="Jones L."/>
            <person name="McDonald S."/>
            <person name="Murphy L.D."/>
            <person name="Niblett D."/>
            <person name="Odell C."/>
            <person name="Oliver K."/>
            <person name="Rajandream M.A."/>
            <person name="Richards C."/>
            <person name="Shore L."/>
            <person name="Walsh S.V."/>
            <person name="Barrell B.G."/>
            <person name="Dietrich F.S."/>
            <person name="Mulligan J.T."/>
            <person name="Allen E."/>
            <person name="Araujo R."/>
            <person name="Aviles E."/>
            <person name="Berno A."/>
            <person name="Carpenter J."/>
            <person name="Chen E."/>
            <person name="Cherry J.M."/>
            <person name="Chung E."/>
            <person name="Duncan M."/>
            <person name="Hunicke-Smith S."/>
            <person name="Hyman R.W."/>
            <person name="Komp C."/>
            <person name="Lashkari D."/>
            <person name="Lew H."/>
            <person name="Lin D."/>
            <person name="Mosedale D."/>
            <person name="Nakahara K."/>
            <person name="Namath A."/>
            <person name="Oefner P."/>
            <person name="Oh C."/>
            <person name="Petel F.X."/>
            <person name="Roberts D."/>
            <person name="Schramm S."/>
            <person name="Schroeder M."/>
            <person name="Shogren T."/>
            <person name="Shroff N."/>
            <person name="Winant A."/>
            <person name="Yelton M.A."/>
            <person name="Botstein D."/>
            <person name="Davis R.W."/>
            <person name="Johnston M."/>
            <person name="Andrews S."/>
            <person name="Brinkman R."/>
            <person name="Cooper J."/>
            <person name="Ding H."/>
            <person name="Du Z."/>
            <person name="Favello A."/>
            <person name="Fulton L."/>
            <person name="Gattung S."/>
            <person name="Greco T."/>
            <person name="Hallsworth K."/>
            <person name="Hawkins J."/>
            <person name="Hillier L.W."/>
            <person name="Jier M."/>
            <person name="Johnson D."/>
            <person name="Johnston L."/>
            <person name="Kirsten J."/>
            <person name="Kucaba T."/>
            <person name="Langston Y."/>
            <person name="Latreille P."/>
            <person name="Le T."/>
            <person name="Mardis E."/>
            <person name="Menezes S."/>
            <person name="Miller N."/>
            <person name="Nhan M."/>
            <person name="Pauley A."/>
            <person name="Peluso D."/>
            <person name="Rifkin L."/>
            <person name="Riles L."/>
            <person name="Taich A."/>
            <person name="Trevaskis E."/>
            <person name="Vignati D."/>
            <person name="Wilcox L."/>
            <person name="Wohldman P."/>
            <person name="Vaudin M."/>
            <person name="Wilson R."/>
            <person name="Waterston R."/>
            <person name="Albermann K."/>
            <person name="Hani J."/>
            <person name="Heumann K."/>
            <person name="Kleine K."/>
            <person name="Mewes H.-W."/>
            <person name="Zollner A."/>
            <person name="Zaccaria P."/>
        </authorList>
    </citation>
    <scope>NUCLEOTIDE SEQUENCE [LARGE SCALE GENOMIC DNA]</scope>
    <source>
        <strain>ATCC 204508 / S288c</strain>
    </source>
</reference>
<reference key="2">
    <citation type="journal article" date="2014" name="G3 (Bethesda)">
        <title>The reference genome sequence of Saccharomyces cerevisiae: Then and now.</title>
        <authorList>
            <person name="Engel S.R."/>
            <person name="Dietrich F.S."/>
            <person name="Fisk D.G."/>
            <person name="Binkley G."/>
            <person name="Balakrishnan R."/>
            <person name="Costanzo M.C."/>
            <person name="Dwight S.S."/>
            <person name="Hitz B.C."/>
            <person name="Karra K."/>
            <person name="Nash R.S."/>
            <person name="Weng S."/>
            <person name="Wong E.D."/>
            <person name="Lloyd P."/>
            <person name="Skrzypek M.S."/>
            <person name="Miyasato S.R."/>
            <person name="Simison M."/>
            <person name="Cherry J.M."/>
        </authorList>
    </citation>
    <scope>GENOME REANNOTATION</scope>
    <source>
        <strain>ATCC 204508 / S288c</strain>
    </source>
</reference>
<reference key="3">
    <citation type="journal article" date="1999" name="Philos. Trans. R. Soc. Lond., B, Biol. Sci.">
        <title>SCF ubiquitin protein ligases and phosphorylation-dependent proteolysis.</title>
        <authorList>
            <person name="Willems A.R."/>
            <person name="Goh T."/>
            <person name="Taylor L."/>
            <person name="Chernushevich I."/>
            <person name="Shevchenko A."/>
            <person name="Tyers M."/>
        </authorList>
    </citation>
    <scope>PROTEIN SEQUENCE OF 132-148 AND 521-529</scope>
    <scope>IDENTIFICATION IN SCF COMPLEX</scope>
    <scope>IDENTIFICATION BY MASS SPECTROMETRY</scope>
</reference>
<reference key="4">
    <citation type="journal article" date="2003" name="Nature">
        <title>Global analysis of protein localization in budding yeast.</title>
        <authorList>
            <person name="Huh W.-K."/>
            <person name="Falvo J.V."/>
            <person name="Gerke L.C."/>
            <person name="Carroll A.S."/>
            <person name="Howson R.W."/>
            <person name="Weissman J.S."/>
            <person name="O'Shea E.K."/>
        </authorList>
    </citation>
    <scope>SUBCELLULAR LOCATION [LARGE SCALE ANALYSIS]</scope>
</reference>
<reference key="5">
    <citation type="journal article" date="2004" name="Proteins">
        <title>Functional interaction of 13 yeast SCF complexes with a set of yeast E2 enzymes in vitro.</title>
        <authorList>
            <person name="Kus B.M."/>
            <person name="Caldon C.E."/>
            <person name="Andorn-Broza R."/>
            <person name="Edwards A.M."/>
        </authorList>
    </citation>
    <scope>INTERACTION WITH SKP1</scope>
    <scope>RECONSTITUTION OF THE SCF(YDR131C) COMPLEX</scope>
</reference>
<name>YD131_YEAST</name>
<protein>
    <recommendedName>
        <fullName>F-box protein YDR131C</fullName>
    </recommendedName>
</protein>
<evidence type="ECO:0000250" key="1"/>
<evidence type="ECO:0000255" key="2">
    <source>
        <dbReference type="PROSITE-ProRule" id="PRU00080"/>
    </source>
</evidence>
<evidence type="ECO:0000269" key="3">
    <source>
    </source>
</evidence>
<evidence type="ECO:0000269" key="4">
    <source>
    </source>
</evidence>
<evidence type="ECO:0000269" key="5">
    <source>
    </source>
</evidence>
<sequence>MFDKLPYEIFKQIAWRIPQEDKISLTYVCKRSYESIIPFIYQNLFLNETYHINGDYDNSFGTCYWSVLNFHYIDEDDSNTKNDMSNRRLAKVKFSYFERTLAESPKRLCPLINRIRCTWHLNEDVMTNVLKLLSEYGSNLKFVDQFVRSSVNKGLEPLSKQLKTLTLTPPTLMPTHNSVSGSYLNKIDRLLLKCDLSRLEKLSIHINALKYFKNTGSPMKIKALVLNLRPDTLNLAEYDASDDFLKELEYIDIFDASTLRQLEILSWYSRDDFPSGEEGGFDRLYVKWGLEGFWKFPNIEKLSLASLVYSEFFLMNCLAVFHNLKILKLDYMGKFDFDVSLINFLSKQVCGKKLQRFDIHCQLNHRLFFPMTDNPLTRLNFDGFCPCSTCKNTIHEVILKKIFPETRSKLLKNPNKFQAHNFFYQMFFENKIMPYTNIIDNESPAMGWDSVPIETFVRKFNENLQSTIENTENITVNKITREDAISLYHLYLHYLKDVFKVFEQSLPNLEYLTINGIPTKIIQVDELQRCAVPLFYNNGYKSNSVYELVDAEALFS</sequence>
<feature type="chain" id="PRO_0000253804" description="F-box protein YDR131C">
    <location>
        <begin position="1"/>
        <end position="556"/>
    </location>
</feature>
<feature type="domain" description="F-box" evidence="2">
    <location>
        <begin position="1"/>
        <end position="44"/>
    </location>
</feature>
<keyword id="KW-0903">Direct protein sequencing</keyword>
<keyword id="KW-1185">Reference proteome</keyword>
<keyword id="KW-0833">Ubl conjugation pathway</keyword>
<keyword id="KW-0926">Vacuole</keyword>
<gene>
    <name type="ordered locus">YDR131C</name>
</gene>
<accession>Q03899</accession>
<accession>D6VSB7</accession>
<proteinExistence type="evidence at protein level"/>
<dbReference type="EMBL" id="Z48179">
    <property type="protein sequence ID" value="CAA88212.1"/>
    <property type="molecule type" value="Genomic_DNA"/>
</dbReference>
<dbReference type="EMBL" id="BK006938">
    <property type="protein sequence ID" value="DAA11977.1"/>
    <property type="molecule type" value="Genomic_DNA"/>
</dbReference>
<dbReference type="PIR" id="S51858">
    <property type="entry name" value="S51858"/>
</dbReference>
<dbReference type="RefSeq" id="NP_010416.1">
    <property type="nucleotide sequence ID" value="NM_001180439.1"/>
</dbReference>
<dbReference type="BioGRID" id="32187">
    <property type="interactions" value="58"/>
</dbReference>
<dbReference type="ComplexPortal" id="CPX-3681">
    <property type="entry name" value="SCF-Ydr131c ubiquitin ligase complex"/>
</dbReference>
<dbReference type="DIP" id="DIP-867N"/>
<dbReference type="FunCoup" id="Q03899">
    <property type="interactions" value="67"/>
</dbReference>
<dbReference type="IntAct" id="Q03899">
    <property type="interactions" value="18"/>
</dbReference>
<dbReference type="STRING" id="4932.YDR131C"/>
<dbReference type="PaxDb" id="4932-YDR131C"/>
<dbReference type="PeptideAtlas" id="Q03899"/>
<dbReference type="EnsemblFungi" id="YDR131C_mRNA">
    <property type="protein sequence ID" value="YDR131C"/>
    <property type="gene ID" value="YDR131C"/>
</dbReference>
<dbReference type="GeneID" id="851709"/>
<dbReference type="KEGG" id="sce:YDR131C"/>
<dbReference type="AGR" id="SGD:S000002538"/>
<dbReference type="SGD" id="S000002538">
    <property type="gene designation" value="YDR131C"/>
</dbReference>
<dbReference type="VEuPathDB" id="FungiDB:YDR131C"/>
<dbReference type="eggNOG" id="ENOG502QTK4">
    <property type="taxonomic scope" value="Eukaryota"/>
</dbReference>
<dbReference type="HOGENOM" id="CLU_020929_1_0_1"/>
<dbReference type="InParanoid" id="Q03899"/>
<dbReference type="OMA" id="DEHQRCN"/>
<dbReference type="OrthoDB" id="4060589at2759"/>
<dbReference type="BioCyc" id="YEAST:G3O-29730-MONOMER"/>
<dbReference type="UniPathway" id="UPA00143"/>
<dbReference type="BioGRID-ORCS" id="851709">
    <property type="hits" value="0 hits in 10 CRISPR screens"/>
</dbReference>
<dbReference type="PRO" id="PR:Q03899"/>
<dbReference type="Proteomes" id="UP000002311">
    <property type="component" value="Chromosome IV"/>
</dbReference>
<dbReference type="RNAct" id="Q03899">
    <property type="molecule type" value="protein"/>
</dbReference>
<dbReference type="GO" id="GO:0019005">
    <property type="term" value="C:SCF ubiquitin ligase complex"/>
    <property type="evidence" value="ECO:0000314"/>
    <property type="project" value="SGD"/>
</dbReference>
<dbReference type="GO" id="GO:0005773">
    <property type="term" value="C:vacuole"/>
    <property type="evidence" value="ECO:0007669"/>
    <property type="project" value="UniProtKB-SubCell"/>
</dbReference>
<dbReference type="GO" id="GO:0031625">
    <property type="term" value="F:ubiquitin protein ligase binding"/>
    <property type="evidence" value="ECO:0000314"/>
    <property type="project" value="SGD"/>
</dbReference>
<dbReference type="GO" id="GO:0016567">
    <property type="term" value="P:protein ubiquitination"/>
    <property type="evidence" value="ECO:0007669"/>
    <property type="project" value="UniProtKB-UniPathway"/>
</dbReference>
<dbReference type="GO" id="GO:0031146">
    <property type="term" value="P:SCF-dependent proteasomal ubiquitin-dependent protein catabolic process"/>
    <property type="evidence" value="ECO:0000316"/>
    <property type="project" value="SGD"/>
</dbReference>
<dbReference type="GO" id="GO:0006511">
    <property type="term" value="P:ubiquitin-dependent protein catabolic process"/>
    <property type="evidence" value="ECO:0000314"/>
    <property type="project" value="ComplexPortal"/>
</dbReference>
<dbReference type="InterPro" id="IPR001810">
    <property type="entry name" value="F-box_dom"/>
</dbReference>
<dbReference type="SUPFAM" id="SSF52047">
    <property type="entry name" value="RNI-like"/>
    <property type="match status" value="1"/>
</dbReference>
<dbReference type="PROSITE" id="PS50181">
    <property type="entry name" value="FBOX"/>
    <property type="match status" value="1"/>
</dbReference>
<comment type="function">
    <text evidence="1">Substrate recognition component of a SCF (SKP1-CUL1-F-box protein) E3 ubiquitin-protein ligase complex which mediates the ubiquitination and subsequent proteasomal degradation of target proteins. Probably recognizes and binds to phosphorylated target proteins (By similarity).</text>
</comment>
<comment type="pathway">
    <text>Protein modification; protein ubiquitination.</text>
</comment>
<comment type="subunit">
    <text evidence="3 5">Interacts with SKP1. Component of the probable SCF(YDR131C) complex containing CDC53, SKP1, RBX1 and YDR131C.</text>
</comment>
<comment type="interaction">
    <interactant intactId="EBI-36201">
        <id>Q03899</id>
    </interactant>
    <interactant intactId="EBI-4090">
        <id>P52286</id>
        <label>SKP1</label>
    </interactant>
    <organismsDiffer>false</organismsDiffer>
    <experiments>4</experiments>
</comment>
<comment type="subcellular location">
    <subcellularLocation>
        <location evidence="4">Vacuole</location>
    </subcellularLocation>
</comment>
<organism>
    <name type="scientific">Saccharomyces cerevisiae (strain ATCC 204508 / S288c)</name>
    <name type="common">Baker's yeast</name>
    <dbReference type="NCBI Taxonomy" id="559292"/>
    <lineage>
        <taxon>Eukaryota</taxon>
        <taxon>Fungi</taxon>
        <taxon>Dikarya</taxon>
        <taxon>Ascomycota</taxon>
        <taxon>Saccharomycotina</taxon>
        <taxon>Saccharomycetes</taxon>
        <taxon>Saccharomycetales</taxon>
        <taxon>Saccharomycetaceae</taxon>
        <taxon>Saccharomyces</taxon>
    </lineage>
</organism>